<gene>
    <name evidence="1" type="primary">rbsD</name>
    <name type="ordered locus">BLi03842</name>
    <name type="ordered locus">BL02440</name>
</gene>
<feature type="chain" id="PRO_0000346177" description="D-ribose pyranase">
    <location>
        <begin position="1"/>
        <end position="131"/>
    </location>
</feature>
<feature type="active site" description="Proton donor" evidence="1">
    <location>
        <position position="20"/>
    </location>
</feature>
<feature type="binding site" evidence="1">
    <location>
        <position position="28"/>
    </location>
    <ligand>
        <name>substrate</name>
    </ligand>
</feature>
<feature type="binding site" evidence="1">
    <location>
        <position position="98"/>
    </location>
    <ligand>
        <name>substrate</name>
    </ligand>
</feature>
<feature type="binding site" evidence="1">
    <location>
        <begin position="120"/>
        <end position="122"/>
    </location>
    <ligand>
        <name>substrate</name>
    </ligand>
</feature>
<name>RBSD_BACLD</name>
<organism>
    <name type="scientific">Bacillus licheniformis (strain ATCC 14580 / DSM 13 / JCM 2505 / CCUG 7422 / NBRC 12200 / NCIMB 9375 / NCTC 10341 / NRRL NRS-1264 / Gibson 46)</name>
    <dbReference type="NCBI Taxonomy" id="279010"/>
    <lineage>
        <taxon>Bacteria</taxon>
        <taxon>Bacillati</taxon>
        <taxon>Bacillota</taxon>
        <taxon>Bacilli</taxon>
        <taxon>Bacillales</taxon>
        <taxon>Bacillaceae</taxon>
        <taxon>Bacillus</taxon>
    </lineage>
</organism>
<dbReference type="EC" id="5.4.99.62" evidence="1"/>
<dbReference type="EMBL" id="CP000002">
    <property type="protein sequence ID" value="AAU25285.1"/>
    <property type="molecule type" value="Genomic_DNA"/>
</dbReference>
<dbReference type="EMBL" id="AE017333">
    <property type="protein sequence ID" value="AAU42658.1"/>
    <property type="molecule type" value="Genomic_DNA"/>
</dbReference>
<dbReference type="RefSeq" id="WP_003185838.1">
    <property type="nucleotide sequence ID" value="NC_006322.1"/>
</dbReference>
<dbReference type="SMR" id="Q65E56"/>
<dbReference type="STRING" id="279010.BL02440"/>
<dbReference type="GeneID" id="92859582"/>
<dbReference type="KEGG" id="bld:BLi03842"/>
<dbReference type="KEGG" id="bli:BL02440"/>
<dbReference type="PATRIC" id="fig|279010.13.peg.3911"/>
<dbReference type="eggNOG" id="COG1869">
    <property type="taxonomic scope" value="Bacteria"/>
</dbReference>
<dbReference type="HOGENOM" id="CLU_135498_0_0_9"/>
<dbReference type="UniPathway" id="UPA00916">
    <property type="reaction ID" value="UER00888"/>
</dbReference>
<dbReference type="Proteomes" id="UP000000606">
    <property type="component" value="Chromosome"/>
</dbReference>
<dbReference type="GO" id="GO:0005829">
    <property type="term" value="C:cytosol"/>
    <property type="evidence" value="ECO:0007669"/>
    <property type="project" value="TreeGrafter"/>
</dbReference>
<dbReference type="GO" id="GO:0062193">
    <property type="term" value="F:D-ribose pyranase activity"/>
    <property type="evidence" value="ECO:0007669"/>
    <property type="project" value="UniProtKB-EC"/>
</dbReference>
<dbReference type="GO" id="GO:0016872">
    <property type="term" value="F:intramolecular lyase activity"/>
    <property type="evidence" value="ECO:0007669"/>
    <property type="project" value="UniProtKB-UniRule"/>
</dbReference>
<dbReference type="GO" id="GO:0048029">
    <property type="term" value="F:monosaccharide binding"/>
    <property type="evidence" value="ECO:0007669"/>
    <property type="project" value="InterPro"/>
</dbReference>
<dbReference type="GO" id="GO:0019303">
    <property type="term" value="P:D-ribose catabolic process"/>
    <property type="evidence" value="ECO:0007669"/>
    <property type="project" value="UniProtKB-UniRule"/>
</dbReference>
<dbReference type="Gene3D" id="3.40.1650.10">
    <property type="entry name" value="RbsD-like domain"/>
    <property type="match status" value="1"/>
</dbReference>
<dbReference type="HAMAP" id="MF_01661">
    <property type="entry name" value="D_rib_pyranase"/>
    <property type="match status" value="1"/>
</dbReference>
<dbReference type="InterPro" id="IPR023064">
    <property type="entry name" value="D-ribose_pyranase"/>
</dbReference>
<dbReference type="InterPro" id="IPR023750">
    <property type="entry name" value="RbsD-like_sf"/>
</dbReference>
<dbReference type="InterPro" id="IPR007721">
    <property type="entry name" value="RbsD_FucU"/>
</dbReference>
<dbReference type="NCBIfam" id="NF008761">
    <property type="entry name" value="PRK11797.1"/>
    <property type="match status" value="1"/>
</dbReference>
<dbReference type="PANTHER" id="PTHR37831">
    <property type="entry name" value="D-RIBOSE PYRANASE"/>
    <property type="match status" value="1"/>
</dbReference>
<dbReference type="PANTHER" id="PTHR37831:SF1">
    <property type="entry name" value="D-RIBOSE PYRANASE"/>
    <property type="match status" value="1"/>
</dbReference>
<dbReference type="Pfam" id="PF05025">
    <property type="entry name" value="RbsD_FucU"/>
    <property type="match status" value="1"/>
</dbReference>
<dbReference type="SUPFAM" id="SSF102546">
    <property type="entry name" value="RbsD-like"/>
    <property type="match status" value="1"/>
</dbReference>
<keyword id="KW-0119">Carbohydrate metabolism</keyword>
<keyword id="KW-0963">Cytoplasm</keyword>
<keyword id="KW-0413">Isomerase</keyword>
<keyword id="KW-1185">Reference proteome</keyword>
<comment type="function">
    <text evidence="1">Catalyzes the interconversion of beta-pyran and beta-furan forms of D-ribose.</text>
</comment>
<comment type="catalytic activity">
    <reaction evidence="1">
        <text>beta-D-ribopyranose = beta-D-ribofuranose</text>
        <dbReference type="Rhea" id="RHEA:25432"/>
        <dbReference type="ChEBI" id="CHEBI:27476"/>
        <dbReference type="ChEBI" id="CHEBI:47002"/>
        <dbReference type="EC" id="5.4.99.62"/>
    </reaction>
</comment>
<comment type="pathway">
    <text evidence="1">Carbohydrate metabolism; D-ribose degradation; D-ribose 5-phosphate from beta-D-ribopyranose: step 1/2.</text>
</comment>
<comment type="subunit">
    <text evidence="1">Homodecamer.</text>
</comment>
<comment type="subcellular location">
    <subcellularLocation>
        <location evidence="1">Cytoplasm</location>
    </subcellularLocation>
</comment>
<comment type="similarity">
    <text evidence="1">Belongs to the RbsD / FucU family. RbsD subfamily.</text>
</comment>
<accession>Q65E56</accession>
<accession>Q62PM6</accession>
<proteinExistence type="inferred from homology"/>
<sequence length="131" mass="13968">MKKHGILNSHIAKLLADLGHTDTIVIADAGLPVPPGVPKIDLALTLGTPGFREVTKLIADEMVVEKVTAAQEIESVNPGQAAFLKAEFSNQKIDYIPHEAFKKATSQAKAVIRTGEATPYANCILHAGVIF</sequence>
<reference key="1">
    <citation type="journal article" date="2004" name="J. Mol. Microbiol. Biotechnol.">
        <title>The complete genome sequence of Bacillus licheniformis DSM13, an organism with great industrial potential.</title>
        <authorList>
            <person name="Veith B."/>
            <person name="Herzberg C."/>
            <person name="Steckel S."/>
            <person name="Feesche J."/>
            <person name="Maurer K.H."/>
            <person name="Ehrenreich P."/>
            <person name="Baeumer S."/>
            <person name="Henne A."/>
            <person name="Liesegang H."/>
            <person name="Merkl R."/>
            <person name="Ehrenreich A."/>
            <person name="Gottschalk G."/>
        </authorList>
    </citation>
    <scope>NUCLEOTIDE SEQUENCE [LARGE SCALE GENOMIC DNA]</scope>
    <source>
        <strain>ATCC 14580 / DSM 13 / JCM 2505 / CCUG 7422 / NBRC 12200 / NCIMB 9375 / NCTC 10341 / NRRL NRS-1264 / Gibson 46</strain>
    </source>
</reference>
<reference key="2">
    <citation type="journal article" date="2004" name="Genome Biol.">
        <title>Complete genome sequence of the industrial bacterium Bacillus licheniformis and comparisons with closely related Bacillus species.</title>
        <authorList>
            <person name="Rey M.W."/>
            <person name="Ramaiya P."/>
            <person name="Nelson B.A."/>
            <person name="Brody-Karpin S.D."/>
            <person name="Zaretsky E.J."/>
            <person name="Tang M."/>
            <person name="Lopez de Leon A."/>
            <person name="Xiang H."/>
            <person name="Gusti V."/>
            <person name="Clausen I.G."/>
            <person name="Olsen P.B."/>
            <person name="Rasmussen M.D."/>
            <person name="Andersen J.T."/>
            <person name="Joergensen P.L."/>
            <person name="Larsen T.S."/>
            <person name="Sorokin A."/>
            <person name="Bolotin A."/>
            <person name="Lapidus A."/>
            <person name="Galleron N."/>
            <person name="Ehrlich S.D."/>
            <person name="Berka R.M."/>
        </authorList>
    </citation>
    <scope>NUCLEOTIDE SEQUENCE [LARGE SCALE GENOMIC DNA]</scope>
    <source>
        <strain>ATCC 14580 / DSM 13 / JCM 2505 / CCUG 7422 / NBRC 12200 / NCIMB 9375 / NCTC 10341 / NRRL NRS-1264 / Gibson 46</strain>
    </source>
</reference>
<protein>
    <recommendedName>
        <fullName evidence="1">D-ribose pyranase</fullName>
        <ecNumber evidence="1">5.4.99.62</ecNumber>
    </recommendedName>
</protein>
<evidence type="ECO:0000255" key="1">
    <source>
        <dbReference type="HAMAP-Rule" id="MF_01661"/>
    </source>
</evidence>